<reference key="1">
    <citation type="submission" date="2007-11" db="EMBL/GenBank/DDBJ databases">
        <title>Complete sequence of Delftia acidovorans DSM 14801 / SPH-1.</title>
        <authorList>
            <person name="Copeland A."/>
            <person name="Lucas S."/>
            <person name="Lapidus A."/>
            <person name="Barry K."/>
            <person name="Glavina del Rio T."/>
            <person name="Dalin E."/>
            <person name="Tice H."/>
            <person name="Pitluck S."/>
            <person name="Lowry S."/>
            <person name="Clum A."/>
            <person name="Schmutz J."/>
            <person name="Larimer F."/>
            <person name="Land M."/>
            <person name="Hauser L."/>
            <person name="Kyrpides N."/>
            <person name="Kim E."/>
            <person name="Schleheck D."/>
            <person name="Richardson P."/>
        </authorList>
    </citation>
    <scope>NUCLEOTIDE SEQUENCE [LARGE SCALE GENOMIC DNA]</scope>
    <source>
        <strain>DSM 14801 / SPH-1</strain>
    </source>
</reference>
<accession>A9BP66</accession>
<proteinExistence type="inferred from homology"/>
<keyword id="KW-0378">Hydrolase</keyword>
<keyword id="KW-1185">Reference proteome</keyword>
<sequence>MLDRDGFRPNVGIILLNQKNQVFWGKRIRTHSWQFPQGGIDRGETPEQAMFRELHEEVGLMPNHVRVVARTRDWLRYEVPDRYIRRDARGHYKGQKQIWYLLQLMGHDWDLNLRATDHPEFDAWRWNDYWVPLDVVVEFKRGVYEMALTELARFLPRGEQQRNRYLRSGMRPREAHETGPETYGAPGLHPARSGSFRVNPGMELPPGACFDPDPQSGQQQVLHPDPGKA</sequence>
<organism>
    <name type="scientific">Delftia acidovorans (strain DSM 14801 / SPH-1)</name>
    <dbReference type="NCBI Taxonomy" id="398578"/>
    <lineage>
        <taxon>Bacteria</taxon>
        <taxon>Pseudomonadati</taxon>
        <taxon>Pseudomonadota</taxon>
        <taxon>Betaproteobacteria</taxon>
        <taxon>Burkholderiales</taxon>
        <taxon>Comamonadaceae</taxon>
        <taxon>Delftia</taxon>
    </lineage>
</organism>
<dbReference type="EC" id="3.6.1.-" evidence="1"/>
<dbReference type="EMBL" id="CP000884">
    <property type="protein sequence ID" value="ABX38111.1"/>
    <property type="molecule type" value="Genomic_DNA"/>
</dbReference>
<dbReference type="RefSeq" id="WP_012207280.1">
    <property type="nucleotide sequence ID" value="NC_010002.1"/>
</dbReference>
<dbReference type="SMR" id="A9BP66"/>
<dbReference type="STRING" id="398578.Daci_5482"/>
<dbReference type="GeneID" id="24119254"/>
<dbReference type="KEGG" id="dac:Daci_5482"/>
<dbReference type="eggNOG" id="COG0494">
    <property type="taxonomic scope" value="Bacteria"/>
</dbReference>
<dbReference type="HOGENOM" id="CLU_087195_1_1_4"/>
<dbReference type="Proteomes" id="UP000000784">
    <property type="component" value="Chromosome"/>
</dbReference>
<dbReference type="GO" id="GO:0016462">
    <property type="term" value="F:pyrophosphatase activity"/>
    <property type="evidence" value="ECO:0007669"/>
    <property type="project" value="UniProtKB-ARBA"/>
</dbReference>
<dbReference type="CDD" id="cd03671">
    <property type="entry name" value="NUDIX_Ap4A_hydrolase_plant_like"/>
    <property type="match status" value="1"/>
</dbReference>
<dbReference type="Gene3D" id="3.90.79.10">
    <property type="entry name" value="Nucleoside Triphosphate Pyrophosphohydrolase"/>
    <property type="match status" value="1"/>
</dbReference>
<dbReference type="HAMAP" id="MF_00298">
    <property type="entry name" value="Nudix_RppH"/>
    <property type="match status" value="1"/>
</dbReference>
<dbReference type="InterPro" id="IPR020476">
    <property type="entry name" value="Nudix_hydrolase"/>
</dbReference>
<dbReference type="InterPro" id="IPR015797">
    <property type="entry name" value="NUDIX_hydrolase-like_dom_sf"/>
</dbReference>
<dbReference type="InterPro" id="IPR020084">
    <property type="entry name" value="NUDIX_hydrolase_CS"/>
</dbReference>
<dbReference type="InterPro" id="IPR000086">
    <property type="entry name" value="NUDIX_hydrolase_dom"/>
</dbReference>
<dbReference type="InterPro" id="IPR022927">
    <property type="entry name" value="RppH"/>
</dbReference>
<dbReference type="NCBIfam" id="NF001935">
    <property type="entry name" value="PRK00714.1-2"/>
    <property type="match status" value="1"/>
</dbReference>
<dbReference type="NCBIfam" id="NF001937">
    <property type="entry name" value="PRK00714.1-4"/>
    <property type="match status" value="1"/>
</dbReference>
<dbReference type="NCBIfam" id="NF001938">
    <property type="entry name" value="PRK00714.1-5"/>
    <property type="match status" value="1"/>
</dbReference>
<dbReference type="PANTHER" id="PTHR43736">
    <property type="entry name" value="ADP-RIBOSE PYROPHOSPHATASE"/>
    <property type="match status" value="1"/>
</dbReference>
<dbReference type="PANTHER" id="PTHR43736:SF1">
    <property type="entry name" value="DIHYDRONEOPTERIN TRIPHOSPHATE DIPHOSPHATASE"/>
    <property type="match status" value="1"/>
</dbReference>
<dbReference type="Pfam" id="PF00293">
    <property type="entry name" value="NUDIX"/>
    <property type="match status" value="1"/>
</dbReference>
<dbReference type="PRINTS" id="PR00502">
    <property type="entry name" value="NUDIXFAMILY"/>
</dbReference>
<dbReference type="SUPFAM" id="SSF55811">
    <property type="entry name" value="Nudix"/>
    <property type="match status" value="1"/>
</dbReference>
<dbReference type="PROSITE" id="PS51462">
    <property type="entry name" value="NUDIX"/>
    <property type="match status" value="1"/>
</dbReference>
<dbReference type="PROSITE" id="PS00893">
    <property type="entry name" value="NUDIX_BOX"/>
    <property type="match status" value="1"/>
</dbReference>
<gene>
    <name evidence="1" type="primary">rppH</name>
    <name evidence="1" type="synonym">nudH</name>
    <name type="ordered locus">Daci_5482</name>
</gene>
<protein>
    <recommendedName>
        <fullName evidence="1">RNA pyrophosphohydrolase</fullName>
        <ecNumber evidence="1">3.6.1.-</ecNumber>
    </recommendedName>
    <alternativeName>
        <fullName evidence="1">(Di)nucleoside polyphosphate hydrolase</fullName>
    </alternativeName>
</protein>
<name>RPPH_DELAS</name>
<feature type="chain" id="PRO_1000115274" description="RNA pyrophosphohydrolase">
    <location>
        <begin position="1"/>
        <end position="229"/>
    </location>
</feature>
<feature type="domain" description="Nudix hydrolase" evidence="1">
    <location>
        <begin position="6"/>
        <end position="149"/>
    </location>
</feature>
<feature type="region of interest" description="Disordered" evidence="2">
    <location>
        <begin position="168"/>
        <end position="229"/>
    </location>
</feature>
<feature type="short sequence motif" description="Nudix box">
    <location>
        <begin position="38"/>
        <end position="59"/>
    </location>
</feature>
<evidence type="ECO:0000255" key="1">
    <source>
        <dbReference type="HAMAP-Rule" id="MF_00298"/>
    </source>
</evidence>
<evidence type="ECO:0000256" key="2">
    <source>
        <dbReference type="SAM" id="MobiDB-lite"/>
    </source>
</evidence>
<comment type="function">
    <text evidence="1">Accelerates the degradation of transcripts by removing pyrophosphate from the 5'-end of triphosphorylated RNA, leading to a more labile monophosphorylated state that can stimulate subsequent ribonuclease cleavage.</text>
</comment>
<comment type="cofactor">
    <cofactor evidence="1">
        <name>a divalent metal cation</name>
        <dbReference type="ChEBI" id="CHEBI:60240"/>
    </cofactor>
</comment>
<comment type="similarity">
    <text evidence="1">Belongs to the Nudix hydrolase family. RppH subfamily.</text>
</comment>